<feature type="chain" id="PRO_0000119766" description="Probable geranylgeranyl transferase type-2 subunit beta">
    <location>
        <begin position="1"/>
        <end position="335"/>
    </location>
</feature>
<feature type="repeat" description="PFTB 1">
    <location>
        <begin position="74"/>
        <end position="115"/>
    </location>
</feature>
<feature type="repeat" description="PFTB 2">
    <location>
        <begin position="122"/>
        <end position="163"/>
    </location>
</feature>
<feature type="repeat" description="PFTB 3">
    <location>
        <begin position="170"/>
        <end position="211"/>
    </location>
</feature>
<feature type="repeat" description="PFTB 4">
    <location>
        <begin position="218"/>
        <end position="259"/>
    </location>
</feature>
<feature type="repeat" description="PFTB 5">
    <location>
        <begin position="266"/>
        <end position="312"/>
    </location>
</feature>
<feature type="binding site" evidence="1">
    <location>
        <begin position="196"/>
        <end position="198"/>
    </location>
    <ligand>
        <name>geranylgeranyl diphosphate</name>
        <dbReference type="ChEBI" id="CHEBI:57533"/>
    </ligand>
</feature>
<feature type="binding site" evidence="1">
    <location>
        <begin position="238"/>
        <end position="250"/>
    </location>
    <ligand>
        <name>geranylgeranyl diphosphate</name>
        <dbReference type="ChEBI" id="CHEBI:57533"/>
    </ligand>
</feature>
<feature type="binding site" evidence="1">
    <location>
        <position position="244"/>
    </location>
    <ligand>
        <name>Zn(2+)</name>
        <dbReference type="ChEBI" id="CHEBI:29105"/>
        <note>catalytic</note>
    </ligand>
</feature>
<feature type="binding site" evidence="1">
    <location>
        <position position="246"/>
    </location>
    <ligand>
        <name>Zn(2+)</name>
        <dbReference type="ChEBI" id="CHEBI:29105"/>
        <note>catalytic</note>
    </ligand>
</feature>
<feature type="binding site" evidence="1">
    <location>
        <position position="296"/>
    </location>
    <ligand>
        <name>Zn(2+)</name>
        <dbReference type="ChEBI" id="CHEBI:29105"/>
        <note>catalytic</note>
    </ligand>
</feature>
<feature type="splice variant" id="VSP_018160" description="In isoform b." evidence="2">
    <original>ADPFHTVFGIAALSLFGDDTLESVDPIFCMTKRCLGDKQVEMYY</original>
    <variation>VSFLNNIQKFIFVLQSNNVLATTKQLFECSFNNS</variation>
    <location>
        <begin position="292"/>
        <end position="335"/>
    </location>
</feature>
<organism>
    <name type="scientific">Caenorhabditis elegans</name>
    <dbReference type="NCBI Taxonomy" id="6239"/>
    <lineage>
        <taxon>Eukaryota</taxon>
        <taxon>Metazoa</taxon>
        <taxon>Ecdysozoa</taxon>
        <taxon>Nematoda</taxon>
        <taxon>Chromadorea</taxon>
        <taxon>Rhabditida</taxon>
        <taxon>Rhabditina</taxon>
        <taxon>Rhabditomorpha</taxon>
        <taxon>Rhabditoidea</taxon>
        <taxon>Rhabditidae</taxon>
        <taxon>Peloderinae</taxon>
        <taxon>Caenorhabditis</taxon>
    </lineage>
</organism>
<reference key="1">
    <citation type="journal article" date="1998" name="Science">
        <title>Genome sequence of the nematode C. elegans: a platform for investigating biology.</title>
        <authorList>
            <consortium name="The C. elegans sequencing consortium"/>
        </authorList>
    </citation>
    <scope>NUCLEOTIDE SEQUENCE [LARGE SCALE GENOMIC DNA]</scope>
    <scope>ALTERNATIVE SPLICING</scope>
    <source>
        <strain>Bristol N2</strain>
    </source>
</reference>
<evidence type="ECO:0000250" key="1"/>
<evidence type="ECO:0000305" key="2"/>
<keyword id="KW-0025">Alternative splicing</keyword>
<keyword id="KW-0479">Metal-binding</keyword>
<keyword id="KW-0637">Prenyltransferase</keyword>
<keyword id="KW-1185">Reference proteome</keyword>
<keyword id="KW-0677">Repeat</keyword>
<keyword id="KW-0808">Transferase</keyword>
<keyword id="KW-0862">Zinc</keyword>
<accession>P41992</accession>
<accession>Q2V4X4</accession>
<gene>
    <name type="primary">ggtb-1</name>
    <name type="ORF">B0280.1</name>
</gene>
<name>GGTB2_CAEEL</name>
<protein>
    <recommendedName>
        <fullName>Probable geranylgeranyl transferase type-2 subunit beta</fullName>
        <ecNumber>2.5.1.60</ecNumber>
    </recommendedName>
    <alternativeName>
        <fullName>Geranylgeranyl transferase type II subunit beta</fullName>
        <shortName>GGTase-II-beta</shortName>
    </alternativeName>
    <alternativeName>
        <fullName>Rab geranyl-geranyltransferase subunit beta</fullName>
        <shortName>Rab GG transferase beta</shortName>
        <shortName>Rab GGTase beta</shortName>
    </alternativeName>
    <alternativeName>
        <fullName>Rab geranylgeranyltransferase subunit beta</fullName>
    </alternativeName>
    <alternativeName>
        <fullName>Type II protein geranyl-geranyltransferase subunit beta</fullName>
    </alternativeName>
</protein>
<sequence>MSFAGLLDFARKDVDLPQNSPNELLKDLHANFINQYEKNKNSYHYIMAEHLRVSGIYWCVNAMDLSKQLERMSTEEIVNYVLGCRNTDGGYGPAPGHDSHLLHTLCAVQTLIIFNSIEKADADTISEYVKGLQQEDGSFCGDLSGEVDTRFTLCSLATCHLLGRLSTLNIDSAVRFLMRCYNTDGGFGTRPGSESHSGQIYCCVGALAIAGRLDEIDRDRTAEWLAFRQCDSGGLNGRPEKLPDVCYSWWVLASLAILGRLNFIDSDAMKKFIYACQDDETGGFADRPGDCADPFHTVFGIAALSLFGDDTLESVDPIFCMTKRCLGDKQVEMYY</sequence>
<dbReference type="EC" id="2.5.1.60"/>
<dbReference type="EMBL" id="FO080148">
    <property type="protein sequence ID" value="CCD61597.1"/>
    <property type="molecule type" value="Genomic_DNA"/>
</dbReference>
<dbReference type="EMBL" id="FO080148">
    <property type="protein sequence ID" value="CCD61598.1"/>
    <property type="molecule type" value="Genomic_DNA"/>
</dbReference>
<dbReference type="RefSeq" id="NP_498559.1">
    <molecule id="P41992-1"/>
    <property type="nucleotide sequence ID" value="NM_066158.9"/>
</dbReference>
<dbReference type="RefSeq" id="NP_741214.2">
    <molecule id="P41992-2"/>
    <property type="nucleotide sequence ID" value="NM_171183.6"/>
</dbReference>
<dbReference type="SMR" id="P41992"/>
<dbReference type="BioGRID" id="41210">
    <property type="interactions" value="4"/>
</dbReference>
<dbReference type="FunCoup" id="P41992">
    <property type="interactions" value="1830"/>
</dbReference>
<dbReference type="STRING" id="6239.B0280.1a.1"/>
<dbReference type="PaxDb" id="6239-B0280.1a"/>
<dbReference type="PeptideAtlas" id="P41992"/>
<dbReference type="EnsemblMetazoa" id="B0280.1a.1">
    <molecule id="P41992-1"/>
    <property type="protein sequence ID" value="B0280.1a.1"/>
    <property type="gene ID" value="WBGene00015099"/>
</dbReference>
<dbReference type="EnsemblMetazoa" id="B0280.1b.1">
    <molecule id="P41992-2"/>
    <property type="protein sequence ID" value="B0280.1b.1"/>
    <property type="gene ID" value="WBGene00015099"/>
</dbReference>
<dbReference type="EnsemblMetazoa" id="B0280.1b.2">
    <molecule id="P41992-2"/>
    <property type="protein sequence ID" value="B0280.1b.2"/>
    <property type="gene ID" value="WBGene00015099"/>
</dbReference>
<dbReference type="GeneID" id="175998"/>
<dbReference type="KEGG" id="cel:CELE_B0280.1"/>
<dbReference type="UCSC" id="B0280.1a">
    <molecule id="P41992-1"/>
    <property type="organism name" value="c. elegans"/>
</dbReference>
<dbReference type="AGR" id="WB:WBGene00015099"/>
<dbReference type="CTD" id="175998"/>
<dbReference type="WormBase" id="B0280.1a">
    <molecule id="P41992-1"/>
    <property type="protein sequence ID" value="CE24762"/>
    <property type="gene ID" value="WBGene00015099"/>
    <property type="gene designation" value="ggtb-1"/>
</dbReference>
<dbReference type="WormBase" id="B0280.1b">
    <molecule id="P41992-2"/>
    <property type="protein sequence ID" value="CE00735"/>
    <property type="gene ID" value="WBGene00015099"/>
    <property type="gene designation" value="ggtb-1"/>
</dbReference>
<dbReference type="eggNOG" id="KOG0366">
    <property type="taxonomic scope" value="Eukaryota"/>
</dbReference>
<dbReference type="GeneTree" id="ENSGT00950000183128"/>
<dbReference type="HOGENOM" id="CLU_028946_3_0_1"/>
<dbReference type="InParanoid" id="P41992"/>
<dbReference type="OMA" id="VKRCQCP"/>
<dbReference type="OrthoDB" id="5428259at2759"/>
<dbReference type="PhylomeDB" id="P41992"/>
<dbReference type="Reactome" id="R-CEL-6803205">
    <property type="pathway name" value="TP53 regulates transcription of several additional cell death genes whose specific roles in p53-dependent apoptosis remain uncertain"/>
</dbReference>
<dbReference type="Reactome" id="R-CEL-8873719">
    <property type="pathway name" value="RAB geranylgeranylation"/>
</dbReference>
<dbReference type="PRO" id="PR:P41992"/>
<dbReference type="Proteomes" id="UP000001940">
    <property type="component" value="Chromosome III"/>
</dbReference>
<dbReference type="Bgee" id="WBGene00015099">
    <property type="expression patterns" value="Expressed in germ line (C elegans) and 4 other cell types or tissues"/>
</dbReference>
<dbReference type="GO" id="GO:0005968">
    <property type="term" value="C:Rab-protein geranylgeranyltransferase complex"/>
    <property type="evidence" value="ECO:0000250"/>
    <property type="project" value="UniProtKB"/>
</dbReference>
<dbReference type="GO" id="GO:0004663">
    <property type="term" value="F:Rab geranylgeranyltransferase activity"/>
    <property type="evidence" value="ECO:0000250"/>
    <property type="project" value="UniProtKB"/>
</dbReference>
<dbReference type="GO" id="GO:0031267">
    <property type="term" value="F:small GTPase binding"/>
    <property type="evidence" value="ECO:0000250"/>
    <property type="project" value="UniProtKB"/>
</dbReference>
<dbReference type="GO" id="GO:0008270">
    <property type="term" value="F:zinc ion binding"/>
    <property type="evidence" value="ECO:0000250"/>
    <property type="project" value="UniProtKB"/>
</dbReference>
<dbReference type="GO" id="GO:0006888">
    <property type="term" value="P:endoplasmic reticulum to Golgi vesicle-mediated transport"/>
    <property type="evidence" value="ECO:0000318"/>
    <property type="project" value="GO_Central"/>
</dbReference>
<dbReference type="GO" id="GO:0036499">
    <property type="term" value="P:PERK-mediated unfolded protein response"/>
    <property type="evidence" value="ECO:0007007"/>
    <property type="project" value="WormBase"/>
</dbReference>
<dbReference type="GO" id="GO:0018344">
    <property type="term" value="P:protein geranylgeranylation"/>
    <property type="evidence" value="ECO:0000250"/>
    <property type="project" value="UniProtKB"/>
</dbReference>
<dbReference type="CDD" id="cd02894">
    <property type="entry name" value="GGTase-II"/>
    <property type="match status" value="1"/>
</dbReference>
<dbReference type="FunFam" id="1.50.10.20:FF:000012">
    <property type="entry name" value="Geranylgeranyl transferase type-2 subunit beta"/>
    <property type="match status" value="1"/>
</dbReference>
<dbReference type="Gene3D" id="1.50.10.20">
    <property type="match status" value="1"/>
</dbReference>
<dbReference type="InterPro" id="IPR045089">
    <property type="entry name" value="PGGT1B-like"/>
</dbReference>
<dbReference type="InterPro" id="IPR001330">
    <property type="entry name" value="Prenyltrans"/>
</dbReference>
<dbReference type="InterPro" id="IPR026873">
    <property type="entry name" value="Ptb1"/>
</dbReference>
<dbReference type="InterPro" id="IPR008930">
    <property type="entry name" value="Terpenoid_cyclase/PrenylTrfase"/>
</dbReference>
<dbReference type="PANTHER" id="PTHR11774">
    <property type="entry name" value="GERANYLGERANYL TRANSFERASE TYPE BETA SUBUNIT"/>
    <property type="match status" value="1"/>
</dbReference>
<dbReference type="PANTHER" id="PTHR11774:SF11">
    <property type="entry name" value="GERANYLGERANYL TRANSFERASE TYPE-2 SUBUNIT BETA"/>
    <property type="match status" value="1"/>
</dbReference>
<dbReference type="Pfam" id="PF00432">
    <property type="entry name" value="Prenyltrans"/>
    <property type="match status" value="1"/>
</dbReference>
<dbReference type="SUPFAM" id="SSF48239">
    <property type="entry name" value="Terpenoid cyclases/Protein prenyltransferases"/>
    <property type="match status" value="1"/>
</dbReference>
<proteinExistence type="inferred from homology"/>
<comment type="function">
    <text evidence="1">Catalyzes the transfer of a geranyl-geranyl moiety from geranyl-geranyl pyrophosphate to both cysteines in Rab proteins with an -XXCC, -XCXC and -CCXX C-terminal.</text>
</comment>
<comment type="catalytic activity">
    <reaction>
        <text>geranylgeranyl diphosphate + L-cysteinyl-[protein] = S-geranylgeranyl-L-cysteinyl-[protein] + diphosphate</text>
        <dbReference type="Rhea" id="RHEA:21240"/>
        <dbReference type="Rhea" id="RHEA-COMP:10131"/>
        <dbReference type="Rhea" id="RHEA-COMP:11537"/>
        <dbReference type="ChEBI" id="CHEBI:29950"/>
        <dbReference type="ChEBI" id="CHEBI:33019"/>
        <dbReference type="ChEBI" id="CHEBI:57533"/>
        <dbReference type="ChEBI" id="CHEBI:86021"/>
        <dbReference type="EC" id="2.5.1.60"/>
    </reaction>
</comment>
<comment type="cofactor">
    <cofactor evidence="1">
        <name>Zn(2+)</name>
        <dbReference type="ChEBI" id="CHEBI:29105"/>
    </cofactor>
    <text evidence="1">Binds 1 zinc ion per subunit.</text>
</comment>
<comment type="subunit">
    <text evidence="1">Heterodimer of an alpha and a beta subunit.</text>
</comment>
<comment type="alternative products">
    <event type="alternative splicing"/>
    <isoform>
        <id>P41992-1</id>
        <name>a</name>
        <sequence type="displayed"/>
    </isoform>
    <isoform>
        <id>P41992-2</id>
        <name>b</name>
        <sequence type="described" ref="VSP_018160"/>
    </isoform>
</comment>
<comment type="similarity">
    <text evidence="2">Belongs to the protein prenyltransferase subunit beta family.</text>
</comment>